<sequence>MLQPPKVLLLYAHPESQDSVANRVLLQPVQQLEHVTVHDLYAHYPDFFIDIHHEQQLLRDHQVIVFQHPLYTYSCPALLKEWLDRVLARGFANGVGGHALTGKHWRSVITTGEQEGTYRIGGYNRYPMEDILRPFELTAAMCHMHWINPMIIYWARRQKPETLASHAQAYVQWLQSPLTRGL</sequence>
<keyword id="KW-0997">Cell inner membrane</keyword>
<keyword id="KW-1003">Cell membrane</keyword>
<keyword id="KW-0472">Membrane</keyword>
<keyword id="KW-0520">NAD</keyword>
<keyword id="KW-0560">Oxidoreductase</keyword>
<comment type="function">
    <text evidence="1">Regulatory subunit of a potassium efflux system that confers protection against electrophiles. Required for full activity of KefB.</text>
</comment>
<comment type="catalytic activity">
    <reaction evidence="1">
        <text>a quinone + NADH + H(+) = a quinol + NAD(+)</text>
        <dbReference type="Rhea" id="RHEA:46160"/>
        <dbReference type="ChEBI" id="CHEBI:15378"/>
        <dbReference type="ChEBI" id="CHEBI:24646"/>
        <dbReference type="ChEBI" id="CHEBI:57540"/>
        <dbReference type="ChEBI" id="CHEBI:57945"/>
        <dbReference type="ChEBI" id="CHEBI:132124"/>
        <dbReference type="EC" id="1.6.5.2"/>
    </reaction>
</comment>
<comment type="catalytic activity">
    <reaction evidence="1">
        <text>a quinone + NADPH + H(+) = a quinol + NADP(+)</text>
        <dbReference type="Rhea" id="RHEA:46164"/>
        <dbReference type="ChEBI" id="CHEBI:15378"/>
        <dbReference type="ChEBI" id="CHEBI:24646"/>
        <dbReference type="ChEBI" id="CHEBI:57783"/>
        <dbReference type="ChEBI" id="CHEBI:58349"/>
        <dbReference type="ChEBI" id="CHEBI:132124"/>
        <dbReference type="EC" id="1.6.5.2"/>
    </reaction>
</comment>
<comment type="subunit">
    <text evidence="1">Interacts with KefB.</text>
</comment>
<comment type="subcellular location">
    <subcellularLocation>
        <location evidence="1">Cell inner membrane</location>
        <topology evidence="1">Peripheral membrane protein</topology>
        <orientation evidence="1">Cytoplasmic side</orientation>
    </subcellularLocation>
</comment>
<comment type="similarity">
    <text evidence="1">Belongs to the NAD(P)H dehydrogenase (quinone) family. KefG subfamily.</text>
</comment>
<protein>
    <recommendedName>
        <fullName evidence="1">Glutathione-regulated potassium-efflux system ancillary protein KefG</fullName>
    </recommendedName>
    <alternativeName>
        <fullName evidence="1">Putative quinone oxidoreductase KefG</fullName>
        <ecNumber evidence="1">1.6.5.2</ecNumber>
    </alternativeName>
</protein>
<name>KEFG_YERPA</name>
<accession>Q1C2S8</accession>
<evidence type="ECO:0000255" key="1">
    <source>
        <dbReference type="HAMAP-Rule" id="MF_01415"/>
    </source>
</evidence>
<dbReference type="EC" id="1.6.5.2" evidence="1"/>
<dbReference type="EMBL" id="CP000308">
    <property type="protein sequence ID" value="ABG15244.1"/>
    <property type="molecule type" value="Genomic_DNA"/>
</dbReference>
<dbReference type="RefSeq" id="WP_002215966.1">
    <property type="nucleotide sequence ID" value="NZ_CP009906.1"/>
</dbReference>
<dbReference type="SMR" id="Q1C2S8"/>
<dbReference type="GeneID" id="57974413"/>
<dbReference type="KEGG" id="ypa:YPA_3282"/>
<dbReference type="Proteomes" id="UP000001971">
    <property type="component" value="Chromosome"/>
</dbReference>
<dbReference type="GO" id="GO:0005886">
    <property type="term" value="C:plasma membrane"/>
    <property type="evidence" value="ECO:0007669"/>
    <property type="project" value="UniProtKB-SubCell"/>
</dbReference>
<dbReference type="GO" id="GO:0009055">
    <property type="term" value="F:electron transfer activity"/>
    <property type="evidence" value="ECO:0007669"/>
    <property type="project" value="TreeGrafter"/>
</dbReference>
<dbReference type="GO" id="GO:0010181">
    <property type="term" value="F:FMN binding"/>
    <property type="evidence" value="ECO:0007669"/>
    <property type="project" value="TreeGrafter"/>
</dbReference>
<dbReference type="GO" id="GO:0050136">
    <property type="term" value="F:NADH:ubiquinone reductase (non-electrogenic) activity"/>
    <property type="evidence" value="ECO:0007669"/>
    <property type="project" value="RHEA"/>
</dbReference>
<dbReference type="GO" id="GO:0008753">
    <property type="term" value="F:NADPH dehydrogenase (quinone) activity"/>
    <property type="evidence" value="ECO:0007669"/>
    <property type="project" value="RHEA"/>
</dbReference>
<dbReference type="GO" id="GO:1901381">
    <property type="term" value="P:positive regulation of potassium ion transmembrane transport"/>
    <property type="evidence" value="ECO:0007669"/>
    <property type="project" value="UniProtKB-UniRule"/>
</dbReference>
<dbReference type="GO" id="GO:0006813">
    <property type="term" value="P:potassium ion transport"/>
    <property type="evidence" value="ECO:0007669"/>
    <property type="project" value="InterPro"/>
</dbReference>
<dbReference type="FunFam" id="3.40.50.360:FF:000013">
    <property type="entry name" value="Glutathione-regulated potassium-efflux system ancillary protein KefG"/>
    <property type="match status" value="1"/>
</dbReference>
<dbReference type="Gene3D" id="3.40.50.360">
    <property type="match status" value="1"/>
</dbReference>
<dbReference type="HAMAP" id="MF_01415">
    <property type="entry name" value="K_H_efflux_KefG"/>
    <property type="match status" value="1"/>
</dbReference>
<dbReference type="InterPro" id="IPR003680">
    <property type="entry name" value="Flavodoxin_fold"/>
</dbReference>
<dbReference type="InterPro" id="IPR029039">
    <property type="entry name" value="Flavoprotein-like_sf"/>
</dbReference>
<dbReference type="InterPro" id="IPR023947">
    <property type="entry name" value="K_H_efflux_KefG"/>
</dbReference>
<dbReference type="InterPro" id="IPR046980">
    <property type="entry name" value="KefG/KefF"/>
</dbReference>
<dbReference type="NCBIfam" id="NF003430">
    <property type="entry name" value="PRK04930.1"/>
    <property type="match status" value="1"/>
</dbReference>
<dbReference type="PANTHER" id="PTHR47307">
    <property type="entry name" value="GLUTATHIONE-REGULATED POTASSIUM-EFFLUX SYSTEM ANCILLARY PROTEIN KEFG"/>
    <property type="match status" value="1"/>
</dbReference>
<dbReference type="PANTHER" id="PTHR47307:SF1">
    <property type="entry name" value="GLUTATHIONE-REGULATED POTASSIUM-EFFLUX SYSTEM ANCILLARY PROTEIN KEFG"/>
    <property type="match status" value="1"/>
</dbReference>
<dbReference type="Pfam" id="PF02525">
    <property type="entry name" value="Flavodoxin_2"/>
    <property type="match status" value="1"/>
</dbReference>
<dbReference type="SUPFAM" id="SSF52218">
    <property type="entry name" value="Flavoproteins"/>
    <property type="match status" value="1"/>
</dbReference>
<proteinExistence type="inferred from homology"/>
<reference key="1">
    <citation type="journal article" date="2006" name="J. Bacteriol.">
        <title>Complete genome sequence of Yersinia pestis strains Antiqua and Nepal516: evidence of gene reduction in an emerging pathogen.</title>
        <authorList>
            <person name="Chain P.S.G."/>
            <person name="Hu P."/>
            <person name="Malfatti S.A."/>
            <person name="Radnedge L."/>
            <person name="Larimer F."/>
            <person name="Vergez L.M."/>
            <person name="Worsham P."/>
            <person name="Chu M.C."/>
            <person name="Andersen G.L."/>
        </authorList>
    </citation>
    <scope>NUCLEOTIDE SEQUENCE [LARGE SCALE GENOMIC DNA]</scope>
    <source>
        <strain>Antiqua</strain>
    </source>
</reference>
<organism>
    <name type="scientific">Yersinia pestis bv. Antiqua (strain Antiqua)</name>
    <dbReference type="NCBI Taxonomy" id="360102"/>
    <lineage>
        <taxon>Bacteria</taxon>
        <taxon>Pseudomonadati</taxon>
        <taxon>Pseudomonadota</taxon>
        <taxon>Gammaproteobacteria</taxon>
        <taxon>Enterobacterales</taxon>
        <taxon>Yersiniaceae</taxon>
        <taxon>Yersinia</taxon>
    </lineage>
</organism>
<gene>
    <name evidence="1" type="primary">kefG</name>
    <name type="ordered locus">YPA_3282</name>
</gene>
<feature type="chain" id="PRO_1000068487" description="Glutathione-regulated potassium-efflux system ancillary protein KefG">
    <location>
        <begin position="1"/>
        <end position="182"/>
    </location>
</feature>